<reference evidence="7" key="1">
    <citation type="journal article" date="2003" name="Genetics">
        <title>The pineapple eye gene is required for survival of Drosophila imaginal disc cells.</title>
        <authorList>
            <person name="Shi W."/>
            <person name="Stampas A."/>
            <person name="Zapata C."/>
            <person name="Baker N.E."/>
        </authorList>
    </citation>
    <scope>NUCLEOTIDE SEQUENCE [MRNA]</scope>
    <scope>FUNCTION</scope>
    <scope>MUTAGENESIS OF 391-GLN--SER-582</scope>
    <source>
        <tissue evidence="7">Imaginal disk</tissue>
    </source>
</reference>
<reference evidence="9" key="2">
    <citation type="journal article" date="2000" name="Science">
        <title>The genome sequence of Drosophila melanogaster.</title>
        <authorList>
            <person name="Adams M.D."/>
            <person name="Celniker S.E."/>
            <person name="Holt R.A."/>
            <person name="Evans C.A."/>
            <person name="Gocayne J.D."/>
            <person name="Amanatides P.G."/>
            <person name="Scherer S.E."/>
            <person name="Li P.W."/>
            <person name="Hoskins R.A."/>
            <person name="Galle R.F."/>
            <person name="George R.A."/>
            <person name="Lewis S.E."/>
            <person name="Richards S."/>
            <person name="Ashburner M."/>
            <person name="Henderson S.N."/>
            <person name="Sutton G.G."/>
            <person name="Wortman J.R."/>
            <person name="Yandell M.D."/>
            <person name="Zhang Q."/>
            <person name="Chen L.X."/>
            <person name="Brandon R.C."/>
            <person name="Rogers Y.-H.C."/>
            <person name="Blazej R.G."/>
            <person name="Champe M."/>
            <person name="Pfeiffer B.D."/>
            <person name="Wan K.H."/>
            <person name="Doyle C."/>
            <person name="Baxter E.G."/>
            <person name="Helt G."/>
            <person name="Nelson C.R."/>
            <person name="Miklos G.L.G."/>
            <person name="Abril J.F."/>
            <person name="Agbayani A."/>
            <person name="An H.-J."/>
            <person name="Andrews-Pfannkoch C."/>
            <person name="Baldwin D."/>
            <person name="Ballew R.M."/>
            <person name="Basu A."/>
            <person name="Baxendale J."/>
            <person name="Bayraktaroglu L."/>
            <person name="Beasley E.M."/>
            <person name="Beeson K.Y."/>
            <person name="Benos P.V."/>
            <person name="Berman B.P."/>
            <person name="Bhandari D."/>
            <person name="Bolshakov S."/>
            <person name="Borkova D."/>
            <person name="Botchan M.R."/>
            <person name="Bouck J."/>
            <person name="Brokstein P."/>
            <person name="Brottier P."/>
            <person name="Burtis K.C."/>
            <person name="Busam D.A."/>
            <person name="Butler H."/>
            <person name="Cadieu E."/>
            <person name="Center A."/>
            <person name="Chandra I."/>
            <person name="Cherry J.M."/>
            <person name="Cawley S."/>
            <person name="Dahlke C."/>
            <person name="Davenport L.B."/>
            <person name="Davies P."/>
            <person name="de Pablos B."/>
            <person name="Delcher A."/>
            <person name="Deng Z."/>
            <person name="Mays A.D."/>
            <person name="Dew I."/>
            <person name="Dietz S.M."/>
            <person name="Dodson K."/>
            <person name="Doup L.E."/>
            <person name="Downes M."/>
            <person name="Dugan-Rocha S."/>
            <person name="Dunkov B.C."/>
            <person name="Dunn P."/>
            <person name="Durbin K.J."/>
            <person name="Evangelista C.C."/>
            <person name="Ferraz C."/>
            <person name="Ferriera S."/>
            <person name="Fleischmann W."/>
            <person name="Fosler C."/>
            <person name="Gabrielian A.E."/>
            <person name="Garg N.S."/>
            <person name="Gelbart W.M."/>
            <person name="Glasser K."/>
            <person name="Glodek A."/>
            <person name="Gong F."/>
            <person name="Gorrell J.H."/>
            <person name="Gu Z."/>
            <person name="Guan P."/>
            <person name="Harris M."/>
            <person name="Harris N.L."/>
            <person name="Harvey D.A."/>
            <person name="Heiman T.J."/>
            <person name="Hernandez J.R."/>
            <person name="Houck J."/>
            <person name="Hostin D."/>
            <person name="Houston K.A."/>
            <person name="Howland T.J."/>
            <person name="Wei M.-H."/>
            <person name="Ibegwam C."/>
            <person name="Jalali M."/>
            <person name="Kalush F."/>
            <person name="Karpen G.H."/>
            <person name="Ke Z."/>
            <person name="Kennison J.A."/>
            <person name="Ketchum K.A."/>
            <person name="Kimmel B.E."/>
            <person name="Kodira C.D."/>
            <person name="Kraft C.L."/>
            <person name="Kravitz S."/>
            <person name="Kulp D."/>
            <person name="Lai Z."/>
            <person name="Lasko P."/>
            <person name="Lei Y."/>
            <person name="Levitsky A.A."/>
            <person name="Li J.H."/>
            <person name="Li Z."/>
            <person name="Liang Y."/>
            <person name="Lin X."/>
            <person name="Liu X."/>
            <person name="Mattei B."/>
            <person name="McIntosh T.C."/>
            <person name="McLeod M.P."/>
            <person name="McPherson D."/>
            <person name="Merkulov G."/>
            <person name="Milshina N.V."/>
            <person name="Mobarry C."/>
            <person name="Morris J."/>
            <person name="Moshrefi A."/>
            <person name="Mount S.M."/>
            <person name="Moy M."/>
            <person name="Murphy B."/>
            <person name="Murphy L."/>
            <person name="Muzny D.M."/>
            <person name="Nelson D.L."/>
            <person name="Nelson D.R."/>
            <person name="Nelson K.A."/>
            <person name="Nixon K."/>
            <person name="Nusskern D.R."/>
            <person name="Pacleb J.M."/>
            <person name="Palazzolo M."/>
            <person name="Pittman G.S."/>
            <person name="Pan S."/>
            <person name="Pollard J."/>
            <person name="Puri V."/>
            <person name="Reese M.G."/>
            <person name="Reinert K."/>
            <person name="Remington K."/>
            <person name="Saunders R.D.C."/>
            <person name="Scheeler F."/>
            <person name="Shen H."/>
            <person name="Shue B.C."/>
            <person name="Siden-Kiamos I."/>
            <person name="Simpson M."/>
            <person name="Skupski M.P."/>
            <person name="Smith T.J."/>
            <person name="Spier E."/>
            <person name="Spradling A.C."/>
            <person name="Stapleton M."/>
            <person name="Strong R."/>
            <person name="Sun E."/>
            <person name="Svirskas R."/>
            <person name="Tector C."/>
            <person name="Turner R."/>
            <person name="Venter E."/>
            <person name="Wang A.H."/>
            <person name="Wang X."/>
            <person name="Wang Z.-Y."/>
            <person name="Wassarman D.A."/>
            <person name="Weinstock G.M."/>
            <person name="Weissenbach J."/>
            <person name="Williams S.M."/>
            <person name="Woodage T."/>
            <person name="Worley K.C."/>
            <person name="Wu D."/>
            <person name="Yang S."/>
            <person name="Yao Q.A."/>
            <person name="Ye J."/>
            <person name="Yeh R.-F."/>
            <person name="Zaveri J.S."/>
            <person name="Zhan M."/>
            <person name="Zhang G."/>
            <person name="Zhao Q."/>
            <person name="Zheng L."/>
            <person name="Zheng X.H."/>
            <person name="Zhong F.N."/>
            <person name="Zhong W."/>
            <person name="Zhou X."/>
            <person name="Zhu S.C."/>
            <person name="Zhu X."/>
            <person name="Smith H.O."/>
            <person name="Gibbs R.A."/>
            <person name="Myers E.W."/>
            <person name="Rubin G.M."/>
            <person name="Venter J.C."/>
        </authorList>
    </citation>
    <scope>NUCLEOTIDE SEQUENCE [LARGE SCALE GENOMIC DNA]</scope>
    <source>
        <strain evidence="9">Berkeley</strain>
    </source>
</reference>
<reference evidence="9" key="3">
    <citation type="journal article" date="2002" name="Genome Biol.">
        <title>Annotation of the Drosophila melanogaster euchromatic genome: a systematic review.</title>
        <authorList>
            <person name="Misra S."/>
            <person name="Crosby M.A."/>
            <person name="Mungall C.J."/>
            <person name="Matthews B.B."/>
            <person name="Campbell K.S."/>
            <person name="Hradecky P."/>
            <person name="Huang Y."/>
            <person name="Kaminker J.S."/>
            <person name="Millburn G.H."/>
            <person name="Prochnik S.E."/>
            <person name="Smith C.D."/>
            <person name="Tupy J.L."/>
            <person name="Whitfield E.J."/>
            <person name="Bayraktaroglu L."/>
            <person name="Berman B.P."/>
            <person name="Bettencourt B.R."/>
            <person name="Celniker S.E."/>
            <person name="de Grey A.D.N.J."/>
            <person name="Drysdale R.A."/>
            <person name="Harris N.L."/>
            <person name="Richter J."/>
            <person name="Russo S."/>
            <person name="Schroeder A.J."/>
            <person name="Shu S.Q."/>
            <person name="Stapleton M."/>
            <person name="Yamada C."/>
            <person name="Ashburner M."/>
            <person name="Gelbart W.M."/>
            <person name="Rubin G.M."/>
            <person name="Lewis S.E."/>
        </authorList>
    </citation>
    <scope>GENOME REANNOTATION</scope>
    <source>
        <strain evidence="9">Berkeley</strain>
    </source>
</reference>
<reference evidence="8" key="4">
    <citation type="journal article" date="2002" name="Genome Biol.">
        <title>A Drosophila full-length cDNA resource.</title>
        <authorList>
            <person name="Stapleton M."/>
            <person name="Carlson J.W."/>
            <person name="Brokstein P."/>
            <person name="Yu C."/>
            <person name="Champe M."/>
            <person name="George R.A."/>
            <person name="Guarin H."/>
            <person name="Kronmiller B."/>
            <person name="Pacleb J.M."/>
            <person name="Park S."/>
            <person name="Wan K.H."/>
            <person name="Rubin G.M."/>
            <person name="Celniker S.E."/>
        </authorList>
    </citation>
    <scope>NUCLEOTIDE SEQUENCE [LARGE SCALE MRNA]</scope>
    <source>
        <strain evidence="8">Berkeley</strain>
        <tissue evidence="8">Embryo</tissue>
    </source>
</reference>
<reference evidence="6" key="5">
    <citation type="journal article" date="2012" name="G3 (Bethesda)">
        <title>Loss-of-Function Screen Reveals Novel Regulators Required for Drosophila Germline Stem Cell Self-Renewal.</title>
        <authorList>
            <person name="Xing Y."/>
            <person name="Kurtz I."/>
            <person name="Thuparani M."/>
            <person name="Legard J."/>
            <person name="Ruohola-Baker H."/>
        </authorList>
    </citation>
    <scope>FUNCTION</scope>
</reference>
<sequence>MEDNKELQCLICKYSDTDDLVFGEWMIVRNLQVHYFCLLLSTHLPQRGGDSSGILGFLLRDIREEAAAAEKRKCWYCNKIGASLQCDRCRSLFHLKCGLENRAVFEFCGQYKSYCYKCRPMDDYKRQLQSNPPRNATCPICFSSIYKVELHCVVYGDCCRLGFAHKKCMRQYALTSGYYLRCIWCRSERFRDSIRLQSVFVPDRDATWEKQRNAYRELHERNLKCDQPNCLCPSGRTYNRLSWVILCCSSCAATSAHLKCLVGALRLPKKRERTDFKCSMCLDVERRIAEGPARTTEETNADGDNQVDGSFYVQKLGPDAATRSLTQTPVFSEEDESERSSNITVIFSQPKSNATSERLSLSPPQEEMIVEIPDSPEASPKTSIDENHSPQPIARRDTSDSPQPIAASEIPDSPQPTAASEIPDLPQTTAINVNPELTQQTALNTIPHSPQPEASFSTQLVSQTFDCPQPQEQAVAKAPNSPSLPKEDPNTLLVLKSGFQCPGEPFFYLVIYEFEHGTCMGECIGTCVLRFKEDDPRIQDTSQAALERVNITPDDVWCRSEDRGIFEHIEKFHEWYRSEGFS</sequence>
<evidence type="ECO:0000255" key="1">
    <source>
        <dbReference type="PROSITE-ProRule" id="PRU01146"/>
    </source>
</evidence>
<evidence type="ECO:0000256" key="2">
    <source>
        <dbReference type="SAM" id="MobiDB-lite"/>
    </source>
</evidence>
<evidence type="ECO:0000269" key="3">
    <source>
    </source>
</evidence>
<evidence type="ECO:0000269" key="4">
    <source>
    </source>
</evidence>
<evidence type="ECO:0000303" key="5">
    <source>
    </source>
</evidence>
<evidence type="ECO:0000305" key="6"/>
<evidence type="ECO:0000312" key="7">
    <source>
        <dbReference type="EMBL" id="AAF63389.1"/>
    </source>
</evidence>
<evidence type="ECO:0000312" key="8">
    <source>
        <dbReference type="FlyBase" id="FBgn0005683"/>
    </source>
</evidence>
<evidence type="ECO:0000312" key="9">
    <source>
        <dbReference type="Proteomes" id="UP000000803"/>
    </source>
</evidence>
<name>PIE_DROME</name>
<keyword id="KW-0479">Metal-binding</keyword>
<keyword id="KW-1185">Reference proteome</keyword>
<keyword id="KW-0862">Zinc</keyword>
<keyword id="KW-0863">Zinc-finger</keyword>
<feature type="chain" id="PRO_0000455703" description="Pineapple eye protein">
    <location>
        <begin position="1"/>
        <end position="582"/>
    </location>
</feature>
<feature type="zinc finger region" description="C2HC pre-PHD-type" evidence="1">
    <location>
        <begin position="6"/>
        <end position="44"/>
    </location>
</feature>
<feature type="zinc finger region" description="PHD-type; atypical" evidence="1">
    <location>
        <begin position="72"/>
        <end position="119"/>
    </location>
</feature>
<feature type="region of interest" description="Extended PHD domain (ePHD)" evidence="1">
    <location>
        <begin position="6"/>
        <end position="119"/>
    </location>
</feature>
<feature type="region of interest" description="Disordered" evidence="2">
    <location>
        <begin position="292"/>
        <end position="311"/>
    </location>
</feature>
<feature type="region of interest" description="Disordered" evidence="2">
    <location>
        <begin position="323"/>
        <end position="422"/>
    </location>
</feature>
<feature type="compositionally biased region" description="Polar residues" evidence="2">
    <location>
        <begin position="340"/>
        <end position="363"/>
    </location>
</feature>
<feature type="compositionally biased region" description="Basic and acidic residues" evidence="2">
    <location>
        <begin position="383"/>
        <end position="399"/>
    </location>
</feature>
<feature type="mutagenesis site" description="Increases apoptosis in the eye imaginal disk thereby leading to a rough eye phenotype." evidence="3">
    <location>
        <begin position="391"/>
        <end position="582"/>
    </location>
</feature>
<feature type="sequence conflict" description="In Ref. 1; AAF63389." evidence="6" ref="1">
    <original>N</original>
    <variation>K</variation>
    <location>
        <position position="131"/>
    </location>
</feature>
<feature type="sequence conflict" description="In Ref. 1; AAF63389." evidence="6" ref="1">
    <original>T</original>
    <variation>I</variation>
    <location>
        <position position="398"/>
    </location>
</feature>
<feature type="sequence conflict" description="In Ref. 1; AAF63389." evidence="6" ref="1">
    <original>S</original>
    <variation>P</variation>
    <location>
        <position position="457"/>
    </location>
</feature>
<feature type="sequence conflict" description="In Ref. 1; AAF63389." evidence="6" ref="1">
    <original>C</original>
    <variation>S</variation>
    <location>
        <position position="467"/>
    </location>
</feature>
<feature type="sequence conflict" description="In Ref. 1; AAF63389." evidence="6" ref="1">
    <original>K</original>
    <variation>E</variation>
    <location>
        <position position="477"/>
    </location>
</feature>
<feature type="sequence conflict" description="In Ref. 1; AAF63389." evidence="6" ref="1">
    <original>N</original>
    <variation>K</variation>
    <location>
        <position position="550"/>
    </location>
</feature>
<dbReference type="EMBL" id="AF247501">
    <property type="protein sequence ID" value="AAF63389.1"/>
    <property type="molecule type" value="mRNA"/>
</dbReference>
<dbReference type="EMBL" id="AE014134">
    <property type="protein sequence ID" value="AAF52945.1"/>
    <property type="molecule type" value="Genomic_DNA"/>
</dbReference>
<dbReference type="EMBL" id="AE014134">
    <property type="protein sequence ID" value="AGB92883.1"/>
    <property type="molecule type" value="Genomic_DNA"/>
</dbReference>
<dbReference type="EMBL" id="AY061141">
    <property type="protein sequence ID" value="AAL28689.1"/>
    <property type="molecule type" value="mRNA"/>
</dbReference>
<dbReference type="RefSeq" id="NP_001260348.1">
    <property type="nucleotide sequence ID" value="NM_001273419.1"/>
</dbReference>
<dbReference type="RefSeq" id="NP_524740.2">
    <property type="nucleotide sequence ID" value="NM_080001.4"/>
</dbReference>
<dbReference type="SMR" id="Q9VKW2"/>
<dbReference type="FunCoup" id="Q9VKW2">
    <property type="interactions" value="414"/>
</dbReference>
<dbReference type="IntAct" id="Q9VKW2">
    <property type="interactions" value="34"/>
</dbReference>
<dbReference type="STRING" id="7227.FBpp0305674"/>
<dbReference type="GlyGen" id="Q9VKW2">
    <property type="glycosylation" value="1 site"/>
</dbReference>
<dbReference type="PaxDb" id="7227-FBpp0305674"/>
<dbReference type="DNASU" id="44315"/>
<dbReference type="EnsemblMetazoa" id="FBtr0080046">
    <property type="protein sequence ID" value="FBpp0079636"/>
    <property type="gene ID" value="FBgn0005683"/>
</dbReference>
<dbReference type="EnsemblMetazoa" id="FBtr0333490">
    <property type="protein sequence ID" value="FBpp0305674"/>
    <property type="gene ID" value="FBgn0005683"/>
</dbReference>
<dbReference type="GeneID" id="44315"/>
<dbReference type="KEGG" id="dme:Dmel_CG5354"/>
<dbReference type="UCSC" id="CG5354-RA">
    <property type="organism name" value="d. melanogaster"/>
</dbReference>
<dbReference type="AGR" id="FB:FBgn0005683"/>
<dbReference type="CTD" id="44315"/>
<dbReference type="FlyBase" id="FBgn0005683">
    <property type="gene designation" value="pie"/>
</dbReference>
<dbReference type="VEuPathDB" id="VectorBase:FBgn0005683"/>
<dbReference type="eggNOG" id="KOG1084">
    <property type="taxonomic scope" value="Eukaryota"/>
</dbReference>
<dbReference type="GeneTree" id="ENSGT00950000182865"/>
<dbReference type="HOGENOM" id="CLU_558100_0_0_1"/>
<dbReference type="InParanoid" id="Q9VKW2"/>
<dbReference type="OMA" id="NVTYGDC"/>
<dbReference type="OrthoDB" id="512616at2759"/>
<dbReference type="PhylomeDB" id="Q9VKW2"/>
<dbReference type="BioGRID-ORCS" id="44315">
    <property type="hits" value="1 hit in 3 CRISPR screens"/>
</dbReference>
<dbReference type="GenomeRNAi" id="44315"/>
<dbReference type="PRO" id="PR:Q9VKW2"/>
<dbReference type="Proteomes" id="UP000000803">
    <property type="component" value="Chromosome 2L"/>
</dbReference>
<dbReference type="Bgee" id="FBgn0005683">
    <property type="expression patterns" value="Expressed in adult abdomen and 27 other cell types or tissues"/>
</dbReference>
<dbReference type="ExpressionAtlas" id="Q9VKW2">
    <property type="expression patterns" value="baseline and differential"/>
</dbReference>
<dbReference type="GO" id="GO:0005634">
    <property type="term" value="C:nucleus"/>
    <property type="evidence" value="ECO:0000318"/>
    <property type="project" value="GO_Central"/>
</dbReference>
<dbReference type="GO" id="GO:0008270">
    <property type="term" value="F:zinc ion binding"/>
    <property type="evidence" value="ECO:0007669"/>
    <property type="project" value="UniProtKB-KW"/>
</dbReference>
<dbReference type="GO" id="GO:0048749">
    <property type="term" value="P:compound eye development"/>
    <property type="evidence" value="ECO:0000315"/>
    <property type="project" value="FlyBase"/>
</dbReference>
<dbReference type="GO" id="GO:0042078">
    <property type="term" value="P:germ-line stem cell division"/>
    <property type="evidence" value="ECO:0000315"/>
    <property type="project" value="FlyBase"/>
</dbReference>
<dbReference type="GO" id="GO:0036335">
    <property type="term" value="P:intestinal stem cell homeostasis"/>
    <property type="evidence" value="ECO:0000315"/>
    <property type="project" value="FlyBase"/>
</dbReference>
<dbReference type="GO" id="GO:2000035">
    <property type="term" value="P:regulation of stem cell division"/>
    <property type="evidence" value="ECO:0000315"/>
    <property type="project" value="UniProtKB"/>
</dbReference>
<dbReference type="GO" id="GO:0035019">
    <property type="term" value="P:somatic stem cell population maintenance"/>
    <property type="evidence" value="ECO:0000315"/>
    <property type="project" value="FlyBase"/>
</dbReference>
<dbReference type="FunFam" id="3.30.40.10:FF:001011">
    <property type="entry name" value="PINEAPPLE EYE"/>
    <property type="match status" value="1"/>
</dbReference>
<dbReference type="Gene3D" id="3.30.40.10">
    <property type="entry name" value="Zinc/RING finger domain, C3HC4 (zinc finger)"/>
    <property type="match status" value="2"/>
</dbReference>
<dbReference type="InterPro" id="IPR034732">
    <property type="entry name" value="EPHD"/>
</dbReference>
<dbReference type="InterPro" id="IPR051188">
    <property type="entry name" value="PHD-type_Zinc_Finger"/>
</dbReference>
<dbReference type="InterPro" id="IPR011011">
    <property type="entry name" value="Znf_FYVE_PHD"/>
</dbReference>
<dbReference type="InterPro" id="IPR001965">
    <property type="entry name" value="Znf_PHD"/>
</dbReference>
<dbReference type="InterPro" id="IPR013083">
    <property type="entry name" value="Znf_RING/FYVE/PHD"/>
</dbReference>
<dbReference type="PANTHER" id="PTHR12420:SF42">
    <property type="entry name" value="G2_M PHASE-SPECIFIC E3 UBIQUITIN-PROTEIN LIGASE"/>
    <property type="match status" value="1"/>
</dbReference>
<dbReference type="PANTHER" id="PTHR12420">
    <property type="entry name" value="PHD FINGER PROTEIN"/>
    <property type="match status" value="1"/>
</dbReference>
<dbReference type="Pfam" id="PF13771">
    <property type="entry name" value="zf-HC5HC2H"/>
    <property type="match status" value="1"/>
</dbReference>
<dbReference type="SMART" id="SM00249">
    <property type="entry name" value="PHD"/>
    <property type="match status" value="2"/>
</dbReference>
<dbReference type="SUPFAM" id="SSF57903">
    <property type="entry name" value="FYVE/PHD zinc finger"/>
    <property type="match status" value="1"/>
</dbReference>
<dbReference type="PROSITE" id="PS51805">
    <property type="entry name" value="EPHD"/>
    <property type="match status" value="1"/>
</dbReference>
<gene>
    <name evidence="8" type="primary">pie</name>
    <name evidence="8" type="synonym">l(2)31Ek</name>
    <name evidence="8" type="synonym">l(2)54</name>
    <name evidence="8" type="synonym">mat(2)ea-E</name>
    <name evidence="8" type="synonym">mat(2)earlyQM47</name>
    <name evidence="8" type="synonym">mat(2)QM47</name>
    <name evidence="8" type="ORF">CG5354</name>
</gene>
<proteinExistence type="evidence at protein level"/>
<comment type="function">
    <text evidence="3 4">Required for survival of imaginal disk cells possibly by regulation of cell apoptosis (PubMed:14704172). Required for germline stem cell self-renewal through mediation of BMP signaling (PubMed:22413088).</text>
</comment>
<organism evidence="9">
    <name type="scientific">Drosophila melanogaster</name>
    <name type="common">Fruit fly</name>
    <dbReference type="NCBI Taxonomy" id="7227"/>
    <lineage>
        <taxon>Eukaryota</taxon>
        <taxon>Metazoa</taxon>
        <taxon>Ecdysozoa</taxon>
        <taxon>Arthropoda</taxon>
        <taxon>Hexapoda</taxon>
        <taxon>Insecta</taxon>
        <taxon>Pterygota</taxon>
        <taxon>Neoptera</taxon>
        <taxon>Endopterygota</taxon>
        <taxon>Diptera</taxon>
        <taxon>Brachycera</taxon>
        <taxon>Muscomorpha</taxon>
        <taxon>Ephydroidea</taxon>
        <taxon>Drosophilidae</taxon>
        <taxon>Drosophila</taxon>
        <taxon>Sophophora</taxon>
    </lineage>
</organism>
<protein>
    <recommendedName>
        <fullName evidence="5 8">Pineapple eye protein</fullName>
    </recommendedName>
</protein>
<accession>Q9VKW2</accession>
<accession>Q9NGN6</accession>